<proteinExistence type="evidence at transcript level"/>
<name>H2AV2_ARATH</name>
<organism>
    <name type="scientific">Arabidopsis thaliana</name>
    <name type="common">Mouse-ear cress</name>
    <dbReference type="NCBI Taxonomy" id="3702"/>
    <lineage>
        <taxon>Eukaryota</taxon>
        <taxon>Viridiplantae</taxon>
        <taxon>Streptophyta</taxon>
        <taxon>Embryophyta</taxon>
        <taxon>Tracheophyta</taxon>
        <taxon>Spermatophyta</taxon>
        <taxon>Magnoliopsida</taxon>
        <taxon>eudicotyledons</taxon>
        <taxon>Gunneridae</taxon>
        <taxon>Pentapetalae</taxon>
        <taxon>rosids</taxon>
        <taxon>malvids</taxon>
        <taxon>Brassicales</taxon>
        <taxon>Brassicaceae</taxon>
        <taxon>Camelineae</taxon>
        <taxon>Arabidopsis</taxon>
    </lineage>
</organism>
<comment type="function">
    <text evidence="1">Variant histones H2A are synthesized throughout the cell cycle and are very different from classical S-phase regulated H2A. May replace conventional H2A in a subset of nucleosomes. Nucleosomes wrap and compact DNA into chromatin, limiting DNA accessibility to the cellular machineries which require DNA as a template. Histones thereby play a central role in transcription regulation, DNA repair, DNA replication and chromosomal stability. DNA accessibility is regulated via a complex set of post-translational modifications of histones, also called histone code, and nucleosome remodeling (By similarity).</text>
</comment>
<comment type="subunit">
    <text>The nucleosome is a histone octamer containing two molecules each of H2A, H2B, H3 and H4 assembled in one H3-H4 heterotetramer and two H2A-H2B heterodimers. The octamer wraps approximately 147 bp of DNA.</text>
</comment>
<comment type="subcellular location">
    <subcellularLocation>
        <location evidence="1">Nucleus</location>
    </subcellularLocation>
    <subcellularLocation>
        <location evidence="1">Chromosome</location>
    </subcellularLocation>
</comment>
<comment type="tissue specificity">
    <text evidence="2">Expressed mainly in meristems and dividing cells. In roots, restricted to the vasculature in the maturation zone.</text>
</comment>
<comment type="similarity">
    <text evidence="3">Belongs to the histone H2A family.</text>
</comment>
<reference key="1">
    <citation type="journal article" date="1999" name="Nature">
        <title>Sequence and analysis of chromosome 2 of the plant Arabidopsis thaliana.</title>
        <authorList>
            <person name="Lin X."/>
            <person name="Kaul S."/>
            <person name="Rounsley S.D."/>
            <person name="Shea T.P."/>
            <person name="Benito M.-I."/>
            <person name="Town C.D."/>
            <person name="Fujii C.Y."/>
            <person name="Mason T.M."/>
            <person name="Bowman C.L."/>
            <person name="Barnstead M.E."/>
            <person name="Feldblyum T.V."/>
            <person name="Buell C.R."/>
            <person name="Ketchum K.A."/>
            <person name="Lee J.J."/>
            <person name="Ronning C.M."/>
            <person name="Koo H.L."/>
            <person name="Moffat K.S."/>
            <person name="Cronin L.A."/>
            <person name="Shen M."/>
            <person name="Pai G."/>
            <person name="Van Aken S."/>
            <person name="Umayam L."/>
            <person name="Tallon L.J."/>
            <person name="Gill J.E."/>
            <person name="Adams M.D."/>
            <person name="Carrera A.J."/>
            <person name="Creasy T.H."/>
            <person name="Goodman H.M."/>
            <person name="Somerville C.R."/>
            <person name="Copenhaver G.P."/>
            <person name="Preuss D."/>
            <person name="Nierman W.C."/>
            <person name="White O."/>
            <person name="Eisen J.A."/>
            <person name="Salzberg S.L."/>
            <person name="Fraser C.M."/>
            <person name="Venter J.C."/>
        </authorList>
    </citation>
    <scope>NUCLEOTIDE SEQUENCE [LARGE SCALE GENOMIC DNA]</scope>
    <source>
        <strain>cv. Columbia</strain>
    </source>
</reference>
<reference key="2">
    <citation type="journal article" date="2017" name="Plant J.">
        <title>Araport11: a complete reannotation of the Arabidopsis thaliana reference genome.</title>
        <authorList>
            <person name="Cheng C.Y."/>
            <person name="Krishnakumar V."/>
            <person name="Chan A.P."/>
            <person name="Thibaud-Nissen F."/>
            <person name="Schobel S."/>
            <person name="Town C.D."/>
        </authorList>
    </citation>
    <scope>GENOME REANNOTATION</scope>
    <source>
        <strain>cv. Columbia</strain>
    </source>
</reference>
<reference key="3">
    <citation type="submission" date="2002-03" db="EMBL/GenBank/DDBJ databases">
        <title>Full-length cDNA from Arabidopsis thaliana.</title>
        <authorList>
            <person name="Brover V.V."/>
            <person name="Troukhan M.E."/>
            <person name="Alexandrov N.A."/>
            <person name="Lu Y.-P."/>
            <person name="Flavell R.B."/>
            <person name="Feldmann K.A."/>
        </authorList>
    </citation>
    <scope>NUCLEOTIDE SEQUENCE [LARGE SCALE MRNA]</scope>
</reference>
<reference key="4">
    <citation type="submission" date="2005-03" db="EMBL/GenBank/DDBJ databases">
        <title>Large-scale analysis of RIKEN Arabidopsis full-length (RAFL) cDNAs.</title>
        <authorList>
            <person name="Totoki Y."/>
            <person name="Seki M."/>
            <person name="Ishida J."/>
            <person name="Nakajima M."/>
            <person name="Enju A."/>
            <person name="Kamiya A."/>
            <person name="Narusaka M."/>
            <person name="Shin-i T."/>
            <person name="Nakagawa M."/>
            <person name="Sakamoto N."/>
            <person name="Oishi K."/>
            <person name="Kohara Y."/>
            <person name="Kobayashi M."/>
            <person name="Toyoda A."/>
            <person name="Sakaki Y."/>
            <person name="Sakurai T."/>
            <person name="Iida K."/>
            <person name="Akiyama K."/>
            <person name="Satou M."/>
            <person name="Toyoda T."/>
            <person name="Konagaya A."/>
            <person name="Carninci P."/>
            <person name="Kawai J."/>
            <person name="Hayashizaki Y."/>
            <person name="Shinozaki K."/>
        </authorList>
    </citation>
    <scope>NUCLEOTIDE SEQUENCE [LARGE SCALE MRNA]</scope>
    <source>
        <strain>cv. Columbia</strain>
    </source>
</reference>
<reference key="5">
    <citation type="journal article" date="2006" name="Plant Cell">
        <title>Constitutive expression exposes functional redundancy between the Arabidopsis histone H2A gene HTA1 and other H2A gene family members.</title>
        <authorList>
            <person name="Yi H."/>
            <person name="Sardesai N."/>
            <person name="Fujinuma T."/>
            <person name="Chan C.-W."/>
            <person name="Veena X."/>
            <person name="Gelvin S.B."/>
        </authorList>
    </citation>
    <scope>TISSUE SPECIFICITY</scope>
    <scope>NOMENCLATURE</scope>
</reference>
<keyword id="KW-0158">Chromosome</keyword>
<keyword id="KW-0238">DNA-binding</keyword>
<keyword id="KW-0544">Nucleosome core</keyword>
<keyword id="KW-0539">Nucleus</keyword>
<keyword id="KW-1185">Reference proteome</keyword>
<dbReference type="EMBL" id="AC007133">
    <property type="protein sequence ID" value="AAD25562.1"/>
    <property type="molecule type" value="Genomic_DNA"/>
</dbReference>
<dbReference type="EMBL" id="CP002685">
    <property type="protein sequence ID" value="AEC09586.1"/>
    <property type="molecule type" value="Genomic_DNA"/>
</dbReference>
<dbReference type="EMBL" id="CP002685">
    <property type="protein sequence ID" value="AEC09587.1"/>
    <property type="molecule type" value="Genomic_DNA"/>
</dbReference>
<dbReference type="EMBL" id="CP002685">
    <property type="protein sequence ID" value="AEC09588.1"/>
    <property type="molecule type" value="Genomic_DNA"/>
</dbReference>
<dbReference type="EMBL" id="CP002685">
    <property type="protein sequence ID" value="ANM62202.1"/>
    <property type="molecule type" value="Genomic_DNA"/>
</dbReference>
<dbReference type="EMBL" id="AY088573">
    <property type="protein sequence ID" value="AAM66104.1"/>
    <property type="molecule type" value="mRNA"/>
</dbReference>
<dbReference type="EMBL" id="AK220868">
    <property type="protein sequence ID" value="BAD94243.1"/>
    <property type="molecule type" value="mRNA"/>
</dbReference>
<dbReference type="PIR" id="F84809">
    <property type="entry name" value="F84809"/>
</dbReference>
<dbReference type="RefSeq" id="NP_001318377.1">
    <property type="nucleotide sequence ID" value="NM_001336738.1"/>
</dbReference>
<dbReference type="RefSeq" id="NP_181415.1">
    <property type="nucleotide sequence ID" value="NM_129438.2"/>
</dbReference>
<dbReference type="RefSeq" id="NP_850298.1">
    <property type="nucleotide sequence ID" value="NM_179967.2"/>
</dbReference>
<dbReference type="RefSeq" id="NP_850299.1">
    <property type="nucleotide sequence ID" value="NM_179968.3"/>
</dbReference>
<dbReference type="SMR" id="Q9SII0"/>
<dbReference type="BioGRID" id="3805">
    <property type="interactions" value="1"/>
</dbReference>
<dbReference type="FunCoup" id="Q9SII0">
    <property type="interactions" value="3211"/>
</dbReference>
<dbReference type="IntAct" id="Q9SII0">
    <property type="interactions" value="3"/>
</dbReference>
<dbReference type="STRING" id="3702.Q9SII0"/>
<dbReference type="PaxDb" id="3702-AT2G38810.3"/>
<dbReference type="ProteomicsDB" id="247210"/>
<dbReference type="EnsemblPlants" id="AT2G38810.1">
    <property type="protein sequence ID" value="AT2G38810.1"/>
    <property type="gene ID" value="AT2G38810"/>
</dbReference>
<dbReference type="EnsemblPlants" id="AT2G38810.2">
    <property type="protein sequence ID" value="AT2G38810.2"/>
    <property type="gene ID" value="AT2G38810"/>
</dbReference>
<dbReference type="EnsemblPlants" id="AT2G38810.3">
    <property type="protein sequence ID" value="AT2G38810.3"/>
    <property type="gene ID" value="AT2G38810"/>
</dbReference>
<dbReference type="EnsemblPlants" id="AT2G38810.4">
    <property type="protein sequence ID" value="AT2G38810.4"/>
    <property type="gene ID" value="AT2G38810"/>
</dbReference>
<dbReference type="GeneID" id="818463"/>
<dbReference type="Gramene" id="AT2G38810.1">
    <property type="protein sequence ID" value="AT2G38810.1"/>
    <property type="gene ID" value="AT2G38810"/>
</dbReference>
<dbReference type="Gramene" id="AT2G38810.2">
    <property type="protein sequence ID" value="AT2G38810.2"/>
    <property type="gene ID" value="AT2G38810"/>
</dbReference>
<dbReference type="Gramene" id="AT2G38810.3">
    <property type="protein sequence ID" value="AT2G38810.3"/>
    <property type="gene ID" value="AT2G38810"/>
</dbReference>
<dbReference type="Gramene" id="AT2G38810.4">
    <property type="protein sequence ID" value="AT2G38810.4"/>
    <property type="gene ID" value="AT2G38810"/>
</dbReference>
<dbReference type="KEGG" id="ath:AT2G38810"/>
<dbReference type="Araport" id="AT2G38810"/>
<dbReference type="TAIR" id="AT2G38810">
    <property type="gene designation" value="HTA8"/>
</dbReference>
<dbReference type="eggNOG" id="KOG1757">
    <property type="taxonomic scope" value="Eukaryota"/>
</dbReference>
<dbReference type="HOGENOM" id="CLU_062828_2_2_1"/>
<dbReference type="InParanoid" id="Q9SII0"/>
<dbReference type="OMA" id="CMGFIHR"/>
<dbReference type="OrthoDB" id="9421954at2759"/>
<dbReference type="PhylomeDB" id="Q9SII0"/>
<dbReference type="CD-CODE" id="4299E36E">
    <property type="entry name" value="Nucleolus"/>
</dbReference>
<dbReference type="PRO" id="PR:Q9SII0"/>
<dbReference type="Proteomes" id="UP000006548">
    <property type="component" value="Chromosome 2"/>
</dbReference>
<dbReference type="ExpressionAtlas" id="Q9SII0">
    <property type="expression patterns" value="baseline and differential"/>
</dbReference>
<dbReference type="GO" id="GO:0005730">
    <property type="term" value="C:nucleolus"/>
    <property type="evidence" value="ECO:0007005"/>
    <property type="project" value="TAIR"/>
</dbReference>
<dbReference type="GO" id="GO:0000786">
    <property type="term" value="C:nucleosome"/>
    <property type="evidence" value="ECO:0007669"/>
    <property type="project" value="UniProtKB-KW"/>
</dbReference>
<dbReference type="GO" id="GO:0003677">
    <property type="term" value="F:DNA binding"/>
    <property type="evidence" value="ECO:0007669"/>
    <property type="project" value="UniProtKB-KW"/>
</dbReference>
<dbReference type="GO" id="GO:0046982">
    <property type="term" value="F:protein heterodimerization activity"/>
    <property type="evidence" value="ECO:0007669"/>
    <property type="project" value="InterPro"/>
</dbReference>
<dbReference type="GO" id="GO:0030527">
    <property type="term" value="F:structural constituent of chromatin"/>
    <property type="evidence" value="ECO:0007669"/>
    <property type="project" value="InterPro"/>
</dbReference>
<dbReference type="GO" id="GO:0010468">
    <property type="term" value="P:regulation of gene expression"/>
    <property type="evidence" value="ECO:0000316"/>
    <property type="project" value="TAIR"/>
</dbReference>
<dbReference type="CDD" id="cd00074">
    <property type="entry name" value="HFD_H2A"/>
    <property type="match status" value="1"/>
</dbReference>
<dbReference type="FunFam" id="1.10.20.10:FF:000005">
    <property type="entry name" value="Histone H2A"/>
    <property type="match status" value="1"/>
</dbReference>
<dbReference type="Gene3D" id="1.10.20.10">
    <property type="entry name" value="Histone, subunit A"/>
    <property type="match status" value="1"/>
</dbReference>
<dbReference type="InterPro" id="IPR009072">
    <property type="entry name" value="Histone-fold"/>
</dbReference>
<dbReference type="InterPro" id="IPR002119">
    <property type="entry name" value="Histone_H2A"/>
</dbReference>
<dbReference type="InterPro" id="IPR007125">
    <property type="entry name" value="Histone_H2A/H2B/H3"/>
</dbReference>
<dbReference type="InterPro" id="IPR032454">
    <property type="entry name" value="Histone_H2A_C"/>
</dbReference>
<dbReference type="PANTHER" id="PTHR23430">
    <property type="entry name" value="HISTONE H2A"/>
    <property type="match status" value="1"/>
</dbReference>
<dbReference type="Pfam" id="PF00125">
    <property type="entry name" value="Histone"/>
    <property type="match status" value="1"/>
</dbReference>
<dbReference type="Pfam" id="PF16211">
    <property type="entry name" value="Histone_H2A_C"/>
    <property type="match status" value="1"/>
</dbReference>
<dbReference type="PRINTS" id="PR00620">
    <property type="entry name" value="HISTONEH2A"/>
</dbReference>
<dbReference type="SMART" id="SM00414">
    <property type="entry name" value="H2A"/>
    <property type="match status" value="1"/>
</dbReference>
<dbReference type="SUPFAM" id="SSF47113">
    <property type="entry name" value="Histone-fold"/>
    <property type="match status" value="1"/>
</dbReference>
<evidence type="ECO:0000250" key="1"/>
<evidence type="ECO:0000269" key="2">
    <source>
    </source>
</evidence>
<evidence type="ECO:0000305" key="3"/>
<gene>
    <name type="ordered locus">At2g38810</name>
    <name type="ORF">F13I13.4</name>
</gene>
<sequence>MAGKGGKGLLAAKTTAAAANKDSVKKKSISRSSRAGIQFPVGRIHRQLKQRVSAHGRVGATAAVYTASILEYLTAEVLELAGNASKDLKVKRITPRHLQLAIRGDEELDTLIKGTIAGGGVIPHIHKSLVNKVTKD</sequence>
<accession>Q9SII0</accession>
<feature type="chain" id="PRO_0000055313" description="Probable histone H2A variant 2">
    <location>
        <begin position="1"/>
        <end position="136"/>
    </location>
</feature>
<protein>
    <recommendedName>
        <fullName>Probable histone H2A variant 2</fullName>
    </recommendedName>
    <alternativeName>
        <fullName>H2A.F/Z 2</fullName>
    </alternativeName>
    <alternativeName>
        <fullName>HTA8</fullName>
    </alternativeName>
</protein>